<gene>
    <name type="primary">Zbtb8a</name>
</gene>
<protein>
    <recommendedName>
        <fullName>Zinc finger and BTB domain-containing protein 8A</fullName>
    </recommendedName>
</protein>
<feature type="chain" id="PRO_0000378510" description="Zinc finger and BTB domain-containing protein 8A">
    <location>
        <begin position="1"/>
        <end position="441"/>
    </location>
</feature>
<feature type="domain" description="BTB" evidence="2">
    <location>
        <begin position="24"/>
        <end position="92"/>
    </location>
</feature>
<feature type="zinc finger region" description="C2H2-type 1" evidence="3">
    <location>
        <begin position="282"/>
        <end position="304"/>
    </location>
</feature>
<feature type="zinc finger region" description="C2H2-type 2" evidence="3">
    <location>
        <begin position="310"/>
        <end position="333"/>
    </location>
</feature>
<feature type="region of interest" description="Disordered" evidence="4">
    <location>
        <begin position="135"/>
        <end position="248"/>
    </location>
</feature>
<feature type="compositionally biased region" description="Basic and acidic residues" evidence="4">
    <location>
        <begin position="198"/>
        <end position="208"/>
    </location>
</feature>
<feature type="compositionally biased region" description="Basic and acidic residues" evidence="4">
    <location>
        <begin position="227"/>
        <end position="242"/>
    </location>
</feature>
<feature type="modified residue" description="Phosphoserine" evidence="1">
    <location>
        <position position="161"/>
    </location>
</feature>
<feature type="modified residue" description="Phosphoserine" evidence="1">
    <location>
        <position position="167"/>
    </location>
</feature>
<feature type="cross-link" description="Glycyl lysine isopeptide (Lys-Gly) (interchain with G-Cter in SUMO2)" evidence="1">
    <location>
        <position position="178"/>
    </location>
</feature>
<feature type="cross-link" description="Glycyl lysine isopeptide (Lys-Gly) (interchain with G-Cter in SUMO2)" evidence="1">
    <location>
        <position position="182"/>
    </location>
</feature>
<feature type="cross-link" description="Glycyl lysine isopeptide (Lys-Gly) (interchain with G-Cter in SUMO2)" evidence="1">
    <location>
        <position position="199"/>
    </location>
</feature>
<feature type="cross-link" description="Glycyl lysine isopeptide (Lys-Gly) (interchain with G-Cter in SUMO2)" evidence="1">
    <location>
        <position position="437"/>
    </location>
</feature>
<dbReference type="EMBL" id="BC161892">
    <property type="protein sequence ID" value="AAI61892.1"/>
    <property type="molecule type" value="mRNA"/>
</dbReference>
<dbReference type="RefSeq" id="NP_001386079.1">
    <property type="nucleotide sequence ID" value="NM_001399150.1"/>
</dbReference>
<dbReference type="RefSeq" id="XP_006238993.1">
    <property type="nucleotide sequence ID" value="XM_006238931.3"/>
</dbReference>
<dbReference type="RefSeq" id="XP_038965722.1">
    <property type="nucleotide sequence ID" value="XM_039109794.2"/>
</dbReference>
<dbReference type="SMR" id="B1WBU4"/>
<dbReference type="FunCoup" id="B1WBU4">
    <property type="interactions" value="331"/>
</dbReference>
<dbReference type="STRING" id="10116.ENSRNOP00000010983"/>
<dbReference type="iPTMnet" id="B1WBU4"/>
<dbReference type="PhosphoSitePlus" id="B1WBU4"/>
<dbReference type="PaxDb" id="10116-ENSRNOP00000010983"/>
<dbReference type="GeneID" id="313049"/>
<dbReference type="AGR" id="RGD:1308756"/>
<dbReference type="RGD" id="1308756">
    <property type="gene designation" value="Zbtb8a"/>
</dbReference>
<dbReference type="VEuPathDB" id="HostDB:ENSRNOG00000008300"/>
<dbReference type="eggNOG" id="KOG1721">
    <property type="taxonomic scope" value="Eukaryota"/>
</dbReference>
<dbReference type="HOGENOM" id="CLU_022356_1_1_1"/>
<dbReference type="InParanoid" id="B1WBU4"/>
<dbReference type="PhylomeDB" id="B1WBU4"/>
<dbReference type="PRO" id="PR:B1WBU4"/>
<dbReference type="Proteomes" id="UP000002494">
    <property type="component" value="Chromosome 5"/>
</dbReference>
<dbReference type="Bgee" id="ENSRNOG00000008300">
    <property type="expression patterns" value="Expressed in pancreas and 18 other cell types or tissues"/>
</dbReference>
<dbReference type="GO" id="GO:0005634">
    <property type="term" value="C:nucleus"/>
    <property type="evidence" value="ECO:0007669"/>
    <property type="project" value="UniProtKB-SubCell"/>
</dbReference>
<dbReference type="GO" id="GO:0000981">
    <property type="term" value="F:DNA-binding transcription factor activity, RNA polymerase II-specific"/>
    <property type="evidence" value="ECO:0000318"/>
    <property type="project" value="GO_Central"/>
</dbReference>
<dbReference type="GO" id="GO:0001227">
    <property type="term" value="F:DNA-binding transcription repressor activity, RNA polymerase II-specific"/>
    <property type="evidence" value="ECO:0000266"/>
    <property type="project" value="RGD"/>
</dbReference>
<dbReference type="GO" id="GO:0000978">
    <property type="term" value="F:RNA polymerase II cis-regulatory region sequence-specific DNA binding"/>
    <property type="evidence" value="ECO:0000318"/>
    <property type="project" value="GO_Central"/>
</dbReference>
<dbReference type="GO" id="GO:0061629">
    <property type="term" value="F:RNA polymerase II-specific DNA-binding transcription factor binding"/>
    <property type="evidence" value="ECO:0000266"/>
    <property type="project" value="RGD"/>
</dbReference>
<dbReference type="GO" id="GO:0000976">
    <property type="term" value="F:transcription cis-regulatory region binding"/>
    <property type="evidence" value="ECO:0000266"/>
    <property type="project" value="RGD"/>
</dbReference>
<dbReference type="GO" id="GO:0001223">
    <property type="term" value="F:transcription coactivator binding"/>
    <property type="evidence" value="ECO:0000266"/>
    <property type="project" value="RGD"/>
</dbReference>
<dbReference type="GO" id="GO:0008270">
    <property type="term" value="F:zinc ion binding"/>
    <property type="evidence" value="ECO:0007669"/>
    <property type="project" value="UniProtKB-KW"/>
</dbReference>
<dbReference type="GO" id="GO:0000122">
    <property type="term" value="P:negative regulation of transcription by RNA polymerase II"/>
    <property type="evidence" value="ECO:0000266"/>
    <property type="project" value="RGD"/>
</dbReference>
<dbReference type="GO" id="GO:0006357">
    <property type="term" value="P:regulation of transcription by RNA polymerase II"/>
    <property type="evidence" value="ECO:0000318"/>
    <property type="project" value="GO_Central"/>
</dbReference>
<dbReference type="CDD" id="cd18329">
    <property type="entry name" value="BTB_POZ_ZBTB8A_BOZF1"/>
    <property type="match status" value="1"/>
</dbReference>
<dbReference type="FunFam" id="3.30.160.60:FF:000218">
    <property type="entry name" value="Zinc finger protein 10"/>
    <property type="match status" value="1"/>
</dbReference>
<dbReference type="Gene3D" id="3.30.160.60">
    <property type="entry name" value="Classic Zinc Finger"/>
    <property type="match status" value="2"/>
</dbReference>
<dbReference type="Gene3D" id="3.30.710.10">
    <property type="entry name" value="Potassium Channel Kv1.1, Chain A"/>
    <property type="match status" value="1"/>
</dbReference>
<dbReference type="InterPro" id="IPR000210">
    <property type="entry name" value="BTB/POZ_dom"/>
</dbReference>
<dbReference type="InterPro" id="IPR011333">
    <property type="entry name" value="SKP1/BTB/POZ_sf"/>
</dbReference>
<dbReference type="InterPro" id="IPR036236">
    <property type="entry name" value="Znf_C2H2_sf"/>
</dbReference>
<dbReference type="InterPro" id="IPR013087">
    <property type="entry name" value="Znf_C2H2_type"/>
</dbReference>
<dbReference type="InterPro" id="IPR050457">
    <property type="entry name" value="ZnFinger_BTB_dom_contain"/>
</dbReference>
<dbReference type="PANTHER" id="PTHR46105">
    <property type="entry name" value="AGAP004733-PA"/>
    <property type="match status" value="1"/>
</dbReference>
<dbReference type="PANTHER" id="PTHR46105:SF12">
    <property type="entry name" value="ZINC FINGER AND BTB DOMAIN-CONTAINING PROTEIN 8A"/>
    <property type="match status" value="1"/>
</dbReference>
<dbReference type="Pfam" id="PF00651">
    <property type="entry name" value="BTB"/>
    <property type="match status" value="1"/>
</dbReference>
<dbReference type="Pfam" id="PF00096">
    <property type="entry name" value="zf-C2H2"/>
    <property type="match status" value="2"/>
</dbReference>
<dbReference type="SMART" id="SM00225">
    <property type="entry name" value="BTB"/>
    <property type="match status" value="1"/>
</dbReference>
<dbReference type="SMART" id="SM00355">
    <property type="entry name" value="ZnF_C2H2"/>
    <property type="match status" value="2"/>
</dbReference>
<dbReference type="SUPFAM" id="SSF57667">
    <property type="entry name" value="beta-beta-alpha zinc fingers"/>
    <property type="match status" value="1"/>
</dbReference>
<dbReference type="SUPFAM" id="SSF54695">
    <property type="entry name" value="POZ domain"/>
    <property type="match status" value="1"/>
</dbReference>
<dbReference type="PROSITE" id="PS50097">
    <property type="entry name" value="BTB"/>
    <property type="match status" value="1"/>
</dbReference>
<dbReference type="PROSITE" id="PS00028">
    <property type="entry name" value="ZINC_FINGER_C2H2_1"/>
    <property type="match status" value="2"/>
</dbReference>
<dbReference type="PROSITE" id="PS50157">
    <property type="entry name" value="ZINC_FINGER_C2H2_2"/>
    <property type="match status" value="2"/>
</dbReference>
<reference key="1">
    <citation type="journal article" date="2004" name="Genome Res.">
        <title>The status, quality, and expansion of the NIH full-length cDNA project: the Mammalian Gene Collection (MGC).</title>
        <authorList>
            <consortium name="The MGC Project Team"/>
        </authorList>
    </citation>
    <scope>NUCLEOTIDE SEQUENCE [LARGE SCALE MRNA]</scope>
    <source>
        <tissue>Heart</tissue>
    </source>
</reference>
<accession>B1WBU4</accession>
<name>ZBT8A_RAT</name>
<comment type="function">
    <text>May be involved in transcriptional regulation.</text>
</comment>
<comment type="subcellular location">
    <subcellularLocation>
        <location evidence="5">Nucleus</location>
    </subcellularLocation>
</comment>
<evidence type="ECO:0000250" key="1">
    <source>
        <dbReference type="UniProtKB" id="Q96BR9"/>
    </source>
</evidence>
<evidence type="ECO:0000255" key="2">
    <source>
        <dbReference type="PROSITE-ProRule" id="PRU00037"/>
    </source>
</evidence>
<evidence type="ECO:0000255" key="3">
    <source>
        <dbReference type="PROSITE-ProRule" id="PRU00042"/>
    </source>
</evidence>
<evidence type="ECO:0000256" key="4">
    <source>
        <dbReference type="SAM" id="MobiDB-lite"/>
    </source>
</evidence>
<evidence type="ECO:0000305" key="5"/>
<proteinExistence type="evidence at transcript level"/>
<sequence>MEISSHQSHLLEQLNEQRRQDVFCDCSILVEGKVFKAHRNVLFASSGYFKMLLSQNSKETSQPTTATFQTFSPDTFTVILDFVYSGKLSLTGQNVIEVMSAASFLQMTDVISVCKTFIKSSLDISEKEKDRYFSLSDKDTGSNGVERPSVYSSSWQEDGGSPRSHLSPDQGPAIVSGKPWNKYSYHPASQRSPQPPLAKHEQRKDPIKKTKHLRLPQPSEVVHFKSGKGDARTSDSGHHVSQSEEQVQVDAEVDPVSAGYPYSQGPEVASRSFPDNLPRLRFKCPYCTHVVKRKADLKRHLRCHTGERPYPCQACGKRFSRLDHLSSHFRTIHQACKLICRKCKRHVTDLTGQVVQEGTRRYRLCNECLTEVGMDSLPADLETEQHRVSPADGDKDCRWHLSEEENRSYVEIVEDGSADLVIQQVDDSEEEEEKEIKPNIR</sequence>
<organism>
    <name type="scientific">Rattus norvegicus</name>
    <name type="common">Rat</name>
    <dbReference type="NCBI Taxonomy" id="10116"/>
    <lineage>
        <taxon>Eukaryota</taxon>
        <taxon>Metazoa</taxon>
        <taxon>Chordata</taxon>
        <taxon>Craniata</taxon>
        <taxon>Vertebrata</taxon>
        <taxon>Euteleostomi</taxon>
        <taxon>Mammalia</taxon>
        <taxon>Eutheria</taxon>
        <taxon>Euarchontoglires</taxon>
        <taxon>Glires</taxon>
        <taxon>Rodentia</taxon>
        <taxon>Myomorpha</taxon>
        <taxon>Muroidea</taxon>
        <taxon>Muridae</taxon>
        <taxon>Murinae</taxon>
        <taxon>Rattus</taxon>
    </lineage>
</organism>
<keyword id="KW-0238">DNA-binding</keyword>
<keyword id="KW-1017">Isopeptide bond</keyword>
<keyword id="KW-0479">Metal-binding</keyword>
<keyword id="KW-0539">Nucleus</keyword>
<keyword id="KW-0597">Phosphoprotein</keyword>
<keyword id="KW-1185">Reference proteome</keyword>
<keyword id="KW-0677">Repeat</keyword>
<keyword id="KW-0804">Transcription</keyword>
<keyword id="KW-0805">Transcription regulation</keyword>
<keyword id="KW-0832">Ubl conjugation</keyword>
<keyword id="KW-0862">Zinc</keyword>
<keyword id="KW-0863">Zinc-finger</keyword>